<organism>
    <name type="scientific">Bacillus cereus (strain ATCC 10987 / NRS 248)</name>
    <dbReference type="NCBI Taxonomy" id="222523"/>
    <lineage>
        <taxon>Bacteria</taxon>
        <taxon>Bacillati</taxon>
        <taxon>Bacillota</taxon>
        <taxon>Bacilli</taxon>
        <taxon>Bacillales</taxon>
        <taxon>Bacillaceae</taxon>
        <taxon>Bacillus</taxon>
        <taxon>Bacillus cereus group</taxon>
    </lineage>
</organism>
<feature type="chain" id="PRO_0000270232" description="Methionine import ATP-binding protein MetN 1">
    <location>
        <begin position="1"/>
        <end position="346"/>
    </location>
</feature>
<feature type="domain" description="ABC transporter" evidence="1">
    <location>
        <begin position="2"/>
        <end position="241"/>
    </location>
</feature>
<feature type="binding site" evidence="1">
    <location>
        <begin position="38"/>
        <end position="45"/>
    </location>
    <ligand>
        <name>ATP</name>
        <dbReference type="ChEBI" id="CHEBI:30616"/>
    </ligand>
</feature>
<reference key="1">
    <citation type="journal article" date="2004" name="Nucleic Acids Res.">
        <title>The genome sequence of Bacillus cereus ATCC 10987 reveals metabolic adaptations and a large plasmid related to Bacillus anthracis pXO1.</title>
        <authorList>
            <person name="Rasko D.A."/>
            <person name="Ravel J."/>
            <person name="Oekstad O.A."/>
            <person name="Helgason E."/>
            <person name="Cer R.Z."/>
            <person name="Jiang L."/>
            <person name="Shores K.A."/>
            <person name="Fouts D.E."/>
            <person name="Tourasse N.J."/>
            <person name="Angiuoli S.V."/>
            <person name="Kolonay J.F."/>
            <person name="Nelson W.C."/>
            <person name="Kolstoe A.-B."/>
            <person name="Fraser C.M."/>
            <person name="Read T.D."/>
        </authorList>
    </citation>
    <scope>NUCLEOTIDE SEQUENCE [LARGE SCALE GENOMIC DNA]</scope>
    <source>
        <strain>ATCC 10987 / NRS 248</strain>
    </source>
</reference>
<accession>Q73F11</accession>
<name>METN1_BACC1</name>
<sequence>MIELKNVSKVFTTKKGNVEALKSTSLQVKKGEVFGIIGYSGAGKSTLIRCVNLLEKPTTGNIIVNSQDLTTLSAKELAKARQKIGMIFQGFNLLKTVTVYENIALPLRLAGISKVEIEKRVEKYLRIVDLFTRKDAYPSELSGGQKQRVAIARALSHEPEVLLSDEATSALDPETTDSILDLLLKINEEIGITILLITHEMNVIQRICDRVAVMEHGAVVESGTVKDIFTNPQHVTTKKFVNSAFAAKIPEDVQKELQTTGEIVTLSFIGNSSGEPALAVATKRFQVYPNILSGNITQLKHEAYGKLIIHMQGEQNEINRALSFLQEQGIIVEGGRTDHGKQVLFG</sequence>
<protein>
    <recommendedName>
        <fullName evidence="1">Methionine import ATP-binding protein MetN 1</fullName>
        <ecNumber evidence="1">7.4.2.11</ecNumber>
    </recommendedName>
</protein>
<dbReference type="EC" id="7.4.2.11" evidence="1"/>
<dbReference type="EMBL" id="AE017194">
    <property type="protein sequence ID" value="AAS39132.1"/>
    <property type="molecule type" value="Genomic_DNA"/>
</dbReference>
<dbReference type="SMR" id="Q73F11"/>
<dbReference type="KEGG" id="bca:BCE_0196"/>
<dbReference type="HOGENOM" id="CLU_000604_1_3_9"/>
<dbReference type="Proteomes" id="UP000002527">
    <property type="component" value="Chromosome"/>
</dbReference>
<dbReference type="GO" id="GO:0005886">
    <property type="term" value="C:plasma membrane"/>
    <property type="evidence" value="ECO:0007669"/>
    <property type="project" value="UniProtKB-SubCell"/>
</dbReference>
<dbReference type="GO" id="GO:0033232">
    <property type="term" value="F:ABC-type D-methionine transporter activity"/>
    <property type="evidence" value="ECO:0007669"/>
    <property type="project" value="UniProtKB-EC"/>
</dbReference>
<dbReference type="GO" id="GO:0005524">
    <property type="term" value="F:ATP binding"/>
    <property type="evidence" value="ECO:0007669"/>
    <property type="project" value="UniProtKB-KW"/>
</dbReference>
<dbReference type="GO" id="GO:0016887">
    <property type="term" value="F:ATP hydrolysis activity"/>
    <property type="evidence" value="ECO:0007669"/>
    <property type="project" value="InterPro"/>
</dbReference>
<dbReference type="CDD" id="cd03258">
    <property type="entry name" value="ABC_MetN_methionine_transporter"/>
    <property type="match status" value="1"/>
</dbReference>
<dbReference type="FunFam" id="3.40.50.300:FF:000233">
    <property type="entry name" value="Methionine import ATP-binding protein MetN"/>
    <property type="match status" value="1"/>
</dbReference>
<dbReference type="Gene3D" id="3.30.70.260">
    <property type="match status" value="1"/>
</dbReference>
<dbReference type="Gene3D" id="3.40.50.300">
    <property type="entry name" value="P-loop containing nucleotide triphosphate hydrolases"/>
    <property type="match status" value="1"/>
</dbReference>
<dbReference type="InterPro" id="IPR003593">
    <property type="entry name" value="AAA+_ATPase"/>
</dbReference>
<dbReference type="InterPro" id="IPR003439">
    <property type="entry name" value="ABC_transporter-like_ATP-bd"/>
</dbReference>
<dbReference type="InterPro" id="IPR017871">
    <property type="entry name" value="ABC_transporter-like_CS"/>
</dbReference>
<dbReference type="InterPro" id="IPR045865">
    <property type="entry name" value="ACT-like_dom_sf"/>
</dbReference>
<dbReference type="InterPro" id="IPR041701">
    <property type="entry name" value="MetN_ABC"/>
</dbReference>
<dbReference type="InterPro" id="IPR050086">
    <property type="entry name" value="MetN_ABC_transporter-like"/>
</dbReference>
<dbReference type="InterPro" id="IPR018449">
    <property type="entry name" value="NIL_domain"/>
</dbReference>
<dbReference type="InterPro" id="IPR027417">
    <property type="entry name" value="P-loop_NTPase"/>
</dbReference>
<dbReference type="PANTHER" id="PTHR43166">
    <property type="entry name" value="AMINO ACID IMPORT ATP-BINDING PROTEIN"/>
    <property type="match status" value="1"/>
</dbReference>
<dbReference type="PANTHER" id="PTHR43166:SF30">
    <property type="entry name" value="METHIONINE IMPORT ATP-BINDING PROTEIN METN"/>
    <property type="match status" value="1"/>
</dbReference>
<dbReference type="Pfam" id="PF00005">
    <property type="entry name" value="ABC_tran"/>
    <property type="match status" value="1"/>
</dbReference>
<dbReference type="Pfam" id="PF09383">
    <property type="entry name" value="NIL"/>
    <property type="match status" value="1"/>
</dbReference>
<dbReference type="SMART" id="SM00382">
    <property type="entry name" value="AAA"/>
    <property type="match status" value="1"/>
</dbReference>
<dbReference type="SMART" id="SM00930">
    <property type="entry name" value="NIL"/>
    <property type="match status" value="1"/>
</dbReference>
<dbReference type="SUPFAM" id="SSF55021">
    <property type="entry name" value="ACT-like"/>
    <property type="match status" value="1"/>
</dbReference>
<dbReference type="SUPFAM" id="SSF52540">
    <property type="entry name" value="P-loop containing nucleoside triphosphate hydrolases"/>
    <property type="match status" value="1"/>
</dbReference>
<dbReference type="PROSITE" id="PS00211">
    <property type="entry name" value="ABC_TRANSPORTER_1"/>
    <property type="match status" value="1"/>
</dbReference>
<dbReference type="PROSITE" id="PS50893">
    <property type="entry name" value="ABC_TRANSPORTER_2"/>
    <property type="match status" value="1"/>
</dbReference>
<dbReference type="PROSITE" id="PS51264">
    <property type="entry name" value="METN"/>
    <property type="match status" value="1"/>
</dbReference>
<comment type="function">
    <text evidence="1">Part of the ABC transporter complex MetNIQ involved in methionine import. Responsible for energy coupling to the transport system.</text>
</comment>
<comment type="catalytic activity">
    <reaction evidence="1">
        <text>L-methionine(out) + ATP + H2O = L-methionine(in) + ADP + phosphate + H(+)</text>
        <dbReference type="Rhea" id="RHEA:29779"/>
        <dbReference type="ChEBI" id="CHEBI:15377"/>
        <dbReference type="ChEBI" id="CHEBI:15378"/>
        <dbReference type="ChEBI" id="CHEBI:30616"/>
        <dbReference type="ChEBI" id="CHEBI:43474"/>
        <dbReference type="ChEBI" id="CHEBI:57844"/>
        <dbReference type="ChEBI" id="CHEBI:456216"/>
        <dbReference type="EC" id="7.4.2.11"/>
    </reaction>
</comment>
<comment type="catalytic activity">
    <reaction evidence="1">
        <text>D-methionine(out) + ATP + H2O = D-methionine(in) + ADP + phosphate + H(+)</text>
        <dbReference type="Rhea" id="RHEA:29767"/>
        <dbReference type="ChEBI" id="CHEBI:15377"/>
        <dbReference type="ChEBI" id="CHEBI:15378"/>
        <dbReference type="ChEBI" id="CHEBI:30616"/>
        <dbReference type="ChEBI" id="CHEBI:43474"/>
        <dbReference type="ChEBI" id="CHEBI:57932"/>
        <dbReference type="ChEBI" id="CHEBI:456216"/>
        <dbReference type="EC" id="7.4.2.11"/>
    </reaction>
</comment>
<comment type="subunit">
    <text evidence="1">The complex is composed of two ATP-binding proteins (MetN), two transmembrane proteins (MetI) and a solute-binding protein (MetQ).</text>
</comment>
<comment type="subcellular location">
    <subcellularLocation>
        <location evidence="1">Cell membrane</location>
        <topology evidence="1">Peripheral membrane protein</topology>
    </subcellularLocation>
</comment>
<comment type="similarity">
    <text evidence="1">Belongs to the ABC transporter superfamily. Methionine importer (TC 3.A.1.24) family.</text>
</comment>
<gene>
    <name evidence="1" type="primary">metN1</name>
    <name type="ordered locus">BCE_0196</name>
</gene>
<proteinExistence type="inferred from homology"/>
<keyword id="KW-0029">Amino-acid transport</keyword>
<keyword id="KW-0067">ATP-binding</keyword>
<keyword id="KW-1003">Cell membrane</keyword>
<keyword id="KW-0472">Membrane</keyword>
<keyword id="KW-0547">Nucleotide-binding</keyword>
<keyword id="KW-1278">Translocase</keyword>
<keyword id="KW-0813">Transport</keyword>
<evidence type="ECO:0000255" key="1">
    <source>
        <dbReference type="HAMAP-Rule" id="MF_01719"/>
    </source>
</evidence>